<name>MUTS_BRUA4</name>
<gene>
    <name evidence="1" type="primary">mutS</name>
    <name type="ordered locus">Oant_0159</name>
</gene>
<feature type="chain" id="PRO_0000335188" description="DNA mismatch repair protein MutS">
    <location>
        <begin position="1"/>
        <end position="910"/>
    </location>
</feature>
<feature type="binding site" evidence="1">
    <location>
        <begin position="658"/>
        <end position="665"/>
    </location>
    <ligand>
        <name>ATP</name>
        <dbReference type="ChEBI" id="CHEBI:30616"/>
    </ligand>
</feature>
<proteinExistence type="inferred from homology"/>
<keyword id="KW-0067">ATP-binding</keyword>
<keyword id="KW-0227">DNA damage</keyword>
<keyword id="KW-0234">DNA repair</keyword>
<keyword id="KW-0238">DNA-binding</keyword>
<keyword id="KW-0547">Nucleotide-binding</keyword>
<keyword id="KW-1185">Reference proteome</keyword>
<sequence>METTANEHGSEAEENTAEAAPVRLTPMMEQYIEIKAANVDSLLFYRMGDFYELFFDDAVEASAALGITLTKRGKHLGEDIPMCGVPVHAADDYLQKLIAKGYRVAVCEQVEDPAEAKKRGSKSVVKRDVIRLVTPGTLTEEKLLDPSEANFLMAMGRTRGDGALALAWIDISTGTFRVAETTPDRLFADVMRVDPRELVVADSAFHDEELRPVFDLVGKAVTPQPATLFDSAAAETRIQRYFNVATLDGFGQFSRPELSAISGAIAYIEKTQISERPPLMRPEREHEGGTLFIDPATRASLELARTMSGNRDGSLLKAVDRTVTGGGARLLAERLTAPLTNPKEIALRLDSVSWFLSEQSLCEAMRAELKGVPDMPRGLSRLAVGRGGPRDLGSLARGFEAAHVIASLLESALLPDELAHARDAVSAMPAIFTAHLDRALADELPLLKRDGGFVRGGYNSELDEMRALRDQSRRVIAGLQANYIEETGIKSLKIKHNNVLGYFIEVTANNAGAMTDTDEAKSRFIHRQTMANAMRFTTTELAELESKIANAADRALSIELAVFEELTAEAVSHADSIRAAASALAVFDVSASLAVLAEEQGYCRPQVDDSLSFNIVAGRHPVVEQALRRQAANPFVANDCDLSPQADGGNGAIWLLTGPNMGGKSTFLRQNALIAIMAQMGSFVPAGSAKIGVVDRLFSRVGASDDLARGRSTFMVEMVETAAILNQAGERSLVILDEIGRGTATFDGLSIAWAAVEYLHEKNRCRALFATHFHEMTALSEKLERLSNVTMRVKEWDNDVVFLHEVAKGAADRSYGVQVARLAGLPEAVVNRARDVLHQLEAGETSGKADKLIDDLPLFSVVLQQEKPKLQVQGKDSDLTKAVSAISPDELTPREALDLIYKLKELAGRA</sequence>
<comment type="function">
    <text evidence="1">This protein is involved in the repair of mismatches in DNA. It is possible that it carries out the mismatch recognition step. This protein has a weak ATPase activity.</text>
</comment>
<comment type="similarity">
    <text evidence="1">Belongs to the DNA mismatch repair MutS family.</text>
</comment>
<reference key="1">
    <citation type="journal article" date="2011" name="J. Bacteriol.">
        <title>Genome of Ochrobactrum anthropi ATCC 49188 T, a versatile opportunistic pathogen and symbiont of several eukaryotic hosts.</title>
        <authorList>
            <person name="Chain P.S."/>
            <person name="Lang D.M."/>
            <person name="Comerci D.J."/>
            <person name="Malfatti S.A."/>
            <person name="Vergez L.M."/>
            <person name="Shin M."/>
            <person name="Ugalde R.A."/>
            <person name="Garcia E."/>
            <person name="Tolmasky M.E."/>
        </authorList>
    </citation>
    <scope>NUCLEOTIDE SEQUENCE [LARGE SCALE GENOMIC DNA]</scope>
    <source>
        <strain>ATCC 49188 / DSM 6882 / CCUG 24695 / JCM 21032 / LMG 3331 / NBRC 15819 / NCTC 12168 / Alc 37</strain>
    </source>
</reference>
<accession>A6WV86</accession>
<dbReference type="EMBL" id="CP000758">
    <property type="protein sequence ID" value="ABS12890.1"/>
    <property type="molecule type" value="Genomic_DNA"/>
</dbReference>
<dbReference type="RefSeq" id="WP_011982364.1">
    <property type="nucleotide sequence ID" value="NC_009667.1"/>
</dbReference>
<dbReference type="SMR" id="A6WV86"/>
<dbReference type="STRING" id="439375.Oant_0159"/>
<dbReference type="KEGG" id="oan:Oant_0159"/>
<dbReference type="PATRIC" id="fig|439375.7.peg.169"/>
<dbReference type="eggNOG" id="COG0249">
    <property type="taxonomic scope" value="Bacteria"/>
</dbReference>
<dbReference type="HOGENOM" id="CLU_002472_3_1_5"/>
<dbReference type="PhylomeDB" id="A6WV86"/>
<dbReference type="Proteomes" id="UP000002301">
    <property type="component" value="Chromosome 1"/>
</dbReference>
<dbReference type="GO" id="GO:0005829">
    <property type="term" value="C:cytosol"/>
    <property type="evidence" value="ECO:0007669"/>
    <property type="project" value="TreeGrafter"/>
</dbReference>
<dbReference type="GO" id="GO:0005524">
    <property type="term" value="F:ATP binding"/>
    <property type="evidence" value="ECO:0007669"/>
    <property type="project" value="UniProtKB-UniRule"/>
</dbReference>
<dbReference type="GO" id="GO:0140664">
    <property type="term" value="F:ATP-dependent DNA damage sensor activity"/>
    <property type="evidence" value="ECO:0007669"/>
    <property type="project" value="InterPro"/>
</dbReference>
<dbReference type="GO" id="GO:0003684">
    <property type="term" value="F:damaged DNA binding"/>
    <property type="evidence" value="ECO:0007669"/>
    <property type="project" value="UniProtKB-UniRule"/>
</dbReference>
<dbReference type="GO" id="GO:0030983">
    <property type="term" value="F:mismatched DNA binding"/>
    <property type="evidence" value="ECO:0007669"/>
    <property type="project" value="InterPro"/>
</dbReference>
<dbReference type="GO" id="GO:0006298">
    <property type="term" value="P:mismatch repair"/>
    <property type="evidence" value="ECO:0007669"/>
    <property type="project" value="UniProtKB-UniRule"/>
</dbReference>
<dbReference type="CDD" id="cd03284">
    <property type="entry name" value="ABC_MutS1"/>
    <property type="match status" value="1"/>
</dbReference>
<dbReference type="FunFam" id="3.40.1170.10:FF:000001">
    <property type="entry name" value="DNA mismatch repair protein MutS"/>
    <property type="match status" value="1"/>
</dbReference>
<dbReference type="FunFam" id="3.40.50.300:FF:001579">
    <property type="entry name" value="DNA mismatch repair protein MutS"/>
    <property type="match status" value="1"/>
</dbReference>
<dbReference type="Gene3D" id="1.10.1420.10">
    <property type="match status" value="2"/>
</dbReference>
<dbReference type="Gene3D" id="6.10.140.430">
    <property type="match status" value="1"/>
</dbReference>
<dbReference type="Gene3D" id="3.40.1170.10">
    <property type="entry name" value="DNA repair protein MutS, domain I"/>
    <property type="match status" value="1"/>
</dbReference>
<dbReference type="Gene3D" id="3.30.420.110">
    <property type="entry name" value="MutS, connector domain"/>
    <property type="match status" value="1"/>
</dbReference>
<dbReference type="Gene3D" id="3.40.50.300">
    <property type="entry name" value="P-loop containing nucleotide triphosphate hydrolases"/>
    <property type="match status" value="1"/>
</dbReference>
<dbReference type="HAMAP" id="MF_00096">
    <property type="entry name" value="MutS"/>
    <property type="match status" value="1"/>
</dbReference>
<dbReference type="InterPro" id="IPR005748">
    <property type="entry name" value="DNA_mismatch_repair_MutS"/>
</dbReference>
<dbReference type="InterPro" id="IPR007695">
    <property type="entry name" value="DNA_mismatch_repair_MutS-lik_N"/>
</dbReference>
<dbReference type="InterPro" id="IPR017261">
    <property type="entry name" value="DNA_mismatch_repair_MutS/MSH"/>
</dbReference>
<dbReference type="InterPro" id="IPR000432">
    <property type="entry name" value="DNA_mismatch_repair_MutS_C"/>
</dbReference>
<dbReference type="InterPro" id="IPR007861">
    <property type="entry name" value="DNA_mismatch_repair_MutS_clamp"/>
</dbReference>
<dbReference type="InterPro" id="IPR007696">
    <property type="entry name" value="DNA_mismatch_repair_MutS_core"/>
</dbReference>
<dbReference type="InterPro" id="IPR016151">
    <property type="entry name" value="DNA_mismatch_repair_MutS_N"/>
</dbReference>
<dbReference type="InterPro" id="IPR036187">
    <property type="entry name" value="DNA_mismatch_repair_MutS_sf"/>
</dbReference>
<dbReference type="InterPro" id="IPR007860">
    <property type="entry name" value="DNA_mmatch_repair_MutS_con_dom"/>
</dbReference>
<dbReference type="InterPro" id="IPR045076">
    <property type="entry name" value="MutS"/>
</dbReference>
<dbReference type="InterPro" id="IPR036678">
    <property type="entry name" value="MutS_con_dom_sf"/>
</dbReference>
<dbReference type="InterPro" id="IPR027417">
    <property type="entry name" value="P-loop_NTPase"/>
</dbReference>
<dbReference type="NCBIfam" id="TIGR01070">
    <property type="entry name" value="mutS1"/>
    <property type="match status" value="1"/>
</dbReference>
<dbReference type="NCBIfam" id="NF003810">
    <property type="entry name" value="PRK05399.1"/>
    <property type="match status" value="1"/>
</dbReference>
<dbReference type="PANTHER" id="PTHR11361:SF34">
    <property type="entry name" value="DNA MISMATCH REPAIR PROTEIN MSH1, MITOCHONDRIAL"/>
    <property type="match status" value="1"/>
</dbReference>
<dbReference type="PANTHER" id="PTHR11361">
    <property type="entry name" value="DNA MISMATCH REPAIR PROTEIN MUTS FAMILY MEMBER"/>
    <property type="match status" value="1"/>
</dbReference>
<dbReference type="Pfam" id="PF01624">
    <property type="entry name" value="MutS_I"/>
    <property type="match status" value="1"/>
</dbReference>
<dbReference type="Pfam" id="PF05188">
    <property type="entry name" value="MutS_II"/>
    <property type="match status" value="1"/>
</dbReference>
<dbReference type="Pfam" id="PF05192">
    <property type="entry name" value="MutS_III"/>
    <property type="match status" value="1"/>
</dbReference>
<dbReference type="Pfam" id="PF05190">
    <property type="entry name" value="MutS_IV"/>
    <property type="match status" value="1"/>
</dbReference>
<dbReference type="Pfam" id="PF00488">
    <property type="entry name" value="MutS_V"/>
    <property type="match status" value="1"/>
</dbReference>
<dbReference type="PIRSF" id="PIRSF037677">
    <property type="entry name" value="DNA_mis_repair_Msh6"/>
    <property type="match status" value="1"/>
</dbReference>
<dbReference type="SMART" id="SM00534">
    <property type="entry name" value="MUTSac"/>
    <property type="match status" value="1"/>
</dbReference>
<dbReference type="SMART" id="SM00533">
    <property type="entry name" value="MUTSd"/>
    <property type="match status" value="1"/>
</dbReference>
<dbReference type="SUPFAM" id="SSF55271">
    <property type="entry name" value="DNA repair protein MutS, domain I"/>
    <property type="match status" value="1"/>
</dbReference>
<dbReference type="SUPFAM" id="SSF53150">
    <property type="entry name" value="DNA repair protein MutS, domain II"/>
    <property type="match status" value="1"/>
</dbReference>
<dbReference type="SUPFAM" id="SSF48334">
    <property type="entry name" value="DNA repair protein MutS, domain III"/>
    <property type="match status" value="1"/>
</dbReference>
<dbReference type="SUPFAM" id="SSF52540">
    <property type="entry name" value="P-loop containing nucleoside triphosphate hydrolases"/>
    <property type="match status" value="1"/>
</dbReference>
<dbReference type="PROSITE" id="PS00486">
    <property type="entry name" value="DNA_MISMATCH_REPAIR_2"/>
    <property type="match status" value="1"/>
</dbReference>
<organism>
    <name type="scientific">Brucella anthropi (strain ATCC 49188 / DSM 6882 / CCUG 24695 / JCM 21032 / LMG 3331 / NBRC 15819 / NCTC 12168 / Alc 37)</name>
    <name type="common">Ochrobactrum anthropi</name>
    <dbReference type="NCBI Taxonomy" id="439375"/>
    <lineage>
        <taxon>Bacteria</taxon>
        <taxon>Pseudomonadati</taxon>
        <taxon>Pseudomonadota</taxon>
        <taxon>Alphaproteobacteria</taxon>
        <taxon>Hyphomicrobiales</taxon>
        <taxon>Brucellaceae</taxon>
        <taxon>Brucella/Ochrobactrum group</taxon>
        <taxon>Brucella</taxon>
    </lineage>
</organism>
<protein>
    <recommendedName>
        <fullName evidence="1">DNA mismatch repair protein MutS</fullName>
    </recommendedName>
</protein>
<evidence type="ECO:0000255" key="1">
    <source>
        <dbReference type="HAMAP-Rule" id="MF_00096"/>
    </source>
</evidence>